<dbReference type="EC" id="2.1.1.-"/>
<dbReference type="EMBL" id="EF189706">
    <property type="protein sequence ID" value="ABP01562.1"/>
    <property type="molecule type" value="mRNA"/>
</dbReference>
<dbReference type="EMBL" id="CM000764">
    <property type="protein sequence ID" value="EES09025.1"/>
    <property type="molecule type" value="Genomic_DNA"/>
</dbReference>
<dbReference type="RefSeq" id="XP_002450037.1">
    <property type="nucleotide sequence ID" value="XM_002449992.1"/>
</dbReference>
<dbReference type="SMR" id="A8QW51"/>
<dbReference type="FunCoup" id="A8QW51">
    <property type="interactions" value="63"/>
</dbReference>
<dbReference type="EnsemblPlants" id="EES09025">
    <property type="protein sequence ID" value="EES09025"/>
    <property type="gene ID" value="SORBI_3005G224400"/>
</dbReference>
<dbReference type="Gramene" id="EES09025">
    <property type="protein sequence ID" value="EES09025"/>
    <property type="gene ID" value="SORBI_3005G224400"/>
</dbReference>
<dbReference type="eggNOG" id="KOG3178">
    <property type="taxonomic scope" value="Eukaryota"/>
</dbReference>
<dbReference type="HOGENOM" id="CLU_005533_7_0_1"/>
<dbReference type="InParanoid" id="A8QW51"/>
<dbReference type="OMA" id="RDENDLC"/>
<dbReference type="Proteomes" id="UP000000768">
    <property type="component" value="Chromosome 5"/>
</dbReference>
<dbReference type="GO" id="GO:0008171">
    <property type="term" value="F:O-methyltransferase activity"/>
    <property type="evidence" value="ECO:0000318"/>
    <property type="project" value="GO_Central"/>
</dbReference>
<dbReference type="GO" id="GO:0046983">
    <property type="term" value="F:protein dimerization activity"/>
    <property type="evidence" value="ECO:0007669"/>
    <property type="project" value="InterPro"/>
</dbReference>
<dbReference type="GO" id="GO:0008757">
    <property type="term" value="F:S-adenosylmethionine-dependent methyltransferase activity"/>
    <property type="evidence" value="ECO:0000318"/>
    <property type="project" value="GO_Central"/>
</dbReference>
<dbReference type="GO" id="GO:0009058">
    <property type="term" value="P:biosynthetic process"/>
    <property type="evidence" value="ECO:0000318"/>
    <property type="project" value="GO_Central"/>
</dbReference>
<dbReference type="GO" id="GO:0032259">
    <property type="term" value="P:methylation"/>
    <property type="evidence" value="ECO:0000318"/>
    <property type="project" value="GO_Central"/>
</dbReference>
<dbReference type="FunFam" id="1.10.10.10:FF:000213">
    <property type="entry name" value="Coniferyl alcohol 9-O-methyltransferase"/>
    <property type="match status" value="1"/>
</dbReference>
<dbReference type="FunFam" id="3.40.50.150:FF:000185">
    <property type="entry name" value="O-methyltransferase family protein"/>
    <property type="match status" value="1"/>
</dbReference>
<dbReference type="Gene3D" id="3.40.50.150">
    <property type="entry name" value="Vaccinia Virus protein VP39"/>
    <property type="match status" value="1"/>
</dbReference>
<dbReference type="Gene3D" id="1.10.10.10">
    <property type="entry name" value="Winged helix-like DNA-binding domain superfamily/Winged helix DNA-binding domain"/>
    <property type="match status" value="1"/>
</dbReference>
<dbReference type="InterPro" id="IPR016461">
    <property type="entry name" value="COMT-like"/>
</dbReference>
<dbReference type="InterPro" id="IPR001077">
    <property type="entry name" value="O_MeTrfase_dom"/>
</dbReference>
<dbReference type="InterPro" id="IPR012967">
    <property type="entry name" value="Plant_O-MeTrfase_dimerisation"/>
</dbReference>
<dbReference type="InterPro" id="IPR029063">
    <property type="entry name" value="SAM-dependent_MTases_sf"/>
</dbReference>
<dbReference type="InterPro" id="IPR036388">
    <property type="entry name" value="WH-like_DNA-bd_sf"/>
</dbReference>
<dbReference type="InterPro" id="IPR036390">
    <property type="entry name" value="WH_DNA-bd_sf"/>
</dbReference>
<dbReference type="PANTHER" id="PTHR11746">
    <property type="entry name" value="O-METHYLTRANSFERASE"/>
    <property type="match status" value="1"/>
</dbReference>
<dbReference type="Pfam" id="PF08100">
    <property type="entry name" value="Dimerisation"/>
    <property type="match status" value="1"/>
</dbReference>
<dbReference type="Pfam" id="PF00891">
    <property type="entry name" value="Methyltransf_2"/>
    <property type="match status" value="1"/>
</dbReference>
<dbReference type="PIRSF" id="PIRSF005739">
    <property type="entry name" value="O-mtase"/>
    <property type="match status" value="1"/>
</dbReference>
<dbReference type="SUPFAM" id="SSF53335">
    <property type="entry name" value="S-adenosyl-L-methionine-dependent methyltransferases"/>
    <property type="match status" value="1"/>
</dbReference>
<dbReference type="SUPFAM" id="SSF46785">
    <property type="entry name" value="Winged helix' DNA-binding domain"/>
    <property type="match status" value="1"/>
</dbReference>
<dbReference type="PROSITE" id="PS51683">
    <property type="entry name" value="SAM_OMT_II"/>
    <property type="match status" value="1"/>
</dbReference>
<organism>
    <name type="scientific">Sorghum bicolor</name>
    <name type="common">Sorghum</name>
    <name type="synonym">Sorghum vulgare</name>
    <dbReference type="NCBI Taxonomy" id="4558"/>
    <lineage>
        <taxon>Eukaryota</taxon>
        <taxon>Viridiplantae</taxon>
        <taxon>Streptophyta</taxon>
        <taxon>Embryophyta</taxon>
        <taxon>Tracheophyta</taxon>
        <taxon>Spermatophyta</taxon>
        <taxon>Magnoliopsida</taxon>
        <taxon>Liliopsida</taxon>
        <taxon>Poales</taxon>
        <taxon>Poaceae</taxon>
        <taxon>PACMAD clade</taxon>
        <taxon>Panicoideae</taxon>
        <taxon>Andropogonodae</taxon>
        <taxon>Andropogoneae</taxon>
        <taxon>Sorghinae</taxon>
        <taxon>Sorghum</taxon>
    </lineage>
</organism>
<proteinExistence type="evidence at transcript level"/>
<protein>
    <recommendedName>
        <fullName>Probable O-methyltransferase 2</fullName>
        <shortName>SbOMT2</shortName>
        <ecNumber>2.1.1.-</ecNumber>
    </recommendedName>
</protein>
<evidence type="ECO:0000255" key="1">
    <source>
        <dbReference type="PROSITE-ProRule" id="PRU01020"/>
    </source>
</evidence>
<evidence type="ECO:0000269" key="2">
    <source>
    </source>
</evidence>
<evidence type="ECO:0000305" key="3"/>
<gene>
    <name type="primary">OMT2</name>
    <name type="ordered locus">Sb05g027340</name>
</gene>
<reference key="1">
    <citation type="journal article" date="2008" name="J. Biol. Chem.">
        <title>A functional genomics investigation of allelochemical biosynthesis in Sorghum bicolor root hairs.</title>
        <authorList>
            <person name="Baerson S.R."/>
            <person name="Dayan F.E."/>
            <person name="Rimando A.M."/>
            <person name="Nanayakkara N.P."/>
            <person name="Liu C.J."/>
            <person name="Schroder J."/>
            <person name="Fishbein M."/>
            <person name="Pan Z."/>
            <person name="Kagan I.A."/>
            <person name="Pratt L.H."/>
            <person name="Cordonnier-Pratt M.M."/>
            <person name="Duke S.O."/>
        </authorList>
    </citation>
    <scope>NUCLEOTIDE SEQUENCE [MRNA]</scope>
    <scope>TISSUE SPECIFICITY</scope>
    <source>
        <strain>cv. BTx623</strain>
    </source>
</reference>
<reference key="2">
    <citation type="journal article" date="2009" name="Nature">
        <title>The Sorghum bicolor genome and the diversification of grasses.</title>
        <authorList>
            <person name="Paterson A.H."/>
            <person name="Bowers J.E."/>
            <person name="Bruggmann R."/>
            <person name="Dubchak I."/>
            <person name="Grimwood J."/>
            <person name="Gundlach H."/>
            <person name="Haberer G."/>
            <person name="Hellsten U."/>
            <person name="Mitros T."/>
            <person name="Poliakov A."/>
            <person name="Schmutz J."/>
            <person name="Spannagl M."/>
            <person name="Tang H."/>
            <person name="Wang X."/>
            <person name="Wicker T."/>
            <person name="Bharti A.K."/>
            <person name="Chapman J."/>
            <person name="Feltus F.A."/>
            <person name="Gowik U."/>
            <person name="Grigoriev I.V."/>
            <person name="Lyons E."/>
            <person name="Maher C.A."/>
            <person name="Martis M."/>
            <person name="Narechania A."/>
            <person name="Otillar R.P."/>
            <person name="Penning B.W."/>
            <person name="Salamov A.A."/>
            <person name="Wang Y."/>
            <person name="Zhang L."/>
            <person name="Carpita N.C."/>
            <person name="Freeling M."/>
            <person name="Gingle A.R."/>
            <person name="Hash C.T."/>
            <person name="Keller B."/>
            <person name="Klein P."/>
            <person name="Kresovich S."/>
            <person name="McCann M.C."/>
            <person name="Ming R."/>
            <person name="Peterson D.G."/>
            <person name="Mehboob-ur-Rahman M."/>
            <person name="Ware D."/>
            <person name="Westhoff P."/>
            <person name="Mayer K.F.X."/>
            <person name="Messing J."/>
            <person name="Rokhsar D.S."/>
        </authorList>
    </citation>
    <scope>NUCLEOTIDE SEQUENCE [LARGE SCALE GENOMIC DNA]</scope>
    <source>
        <strain>cv. BTx623</strain>
    </source>
</reference>
<reference key="3">
    <citation type="journal article" date="2018" name="Plant J.">
        <title>The Sorghum bicolor reference genome: improved assembly, gene annotations, a transcriptome atlas, and signatures of genome organization.</title>
        <authorList>
            <person name="McCormick R.F."/>
            <person name="Truong S.K."/>
            <person name="Sreedasyam A."/>
            <person name="Jenkins J."/>
            <person name="Shu S."/>
            <person name="Sims D."/>
            <person name="Kennedy M."/>
            <person name="Amirebrahimi M."/>
            <person name="Weers B.D."/>
            <person name="McKinley B."/>
            <person name="Mattison A."/>
            <person name="Morishige D.T."/>
            <person name="Grimwood J."/>
            <person name="Schmutz J."/>
            <person name="Mullet J.E."/>
        </authorList>
    </citation>
    <scope>GENOME REANNOTATION</scope>
    <source>
        <strain>cv. BTx623</strain>
    </source>
</reference>
<name>OMT2_SORBI</name>
<keyword id="KW-0489">Methyltransferase</keyword>
<keyword id="KW-1185">Reference proteome</keyword>
<keyword id="KW-0949">S-adenosyl-L-methionine</keyword>
<keyword id="KW-0808">Transferase</keyword>
<sequence length="372" mass="40898">MAASSHAIAPTDAELLQAQADLWRHSLYYLTSMALKCAVELHIPTAIHNLGGATTLPDLVTALSLPKTKLPFLGRIMRLLVTSGIFASDGANGDGAAAEAVYRLNPLSWLLVEGVESEDHTYQKYFVLATVSQHYVDAGLSLADWFRKDLPEPLPSPFECLHGVPLAHESTKLLDEELDRIVEEGVAAHDNLAIGTIIRECSDIFSGLHSLTYCCGRQGNISATAIIKAFPDIKCTVLNLPRVIETAPADDAVSSVTGDLFHTIPPAQAVMLKLVLHFWSDEDCVKILEQCRKAIPSREEGGKVIIIEILLGPYMGPIMYEAQLLMDMLMMVNTRGRQRTENDWRQIFTKAGFSDYKIVKKIGARGVIEVYP</sequence>
<feature type="chain" id="PRO_0000409378" description="Probable O-methyltransferase 2">
    <location>
        <begin position="1"/>
        <end position="372"/>
    </location>
</feature>
<feature type="active site" description="Proton acceptor" evidence="1">
    <location>
        <position position="277"/>
    </location>
</feature>
<feature type="binding site" evidence="1">
    <location>
        <position position="216"/>
    </location>
    <ligand>
        <name>S-adenosyl-L-methionine</name>
        <dbReference type="ChEBI" id="CHEBI:59789"/>
    </ligand>
</feature>
<feature type="binding site" evidence="1">
    <location>
        <position position="259"/>
    </location>
    <ligand>
        <name>S-adenosyl-L-methionine</name>
        <dbReference type="ChEBI" id="CHEBI:59789"/>
    </ligand>
</feature>
<feature type="binding site" evidence="1">
    <location>
        <position position="273"/>
    </location>
    <ligand>
        <name>S-adenosyl-L-methionine</name>
        <dbReference type="ChEBI" id="CHEBI:59789"/>
    </ligand>
</feature>
<accession>A8QW51</accession>
<comment type="function">
    <text>O-methyltransferase of unknown substrate specificity. Not active on resorcinol, orcinol, guaiacol, eugenol, ferulic acid, p-coumaric acid, catechol, caffeic acid or monomethyl ethers of resorcinol or orcinol.</text>
</comment>
<comment type="subunit">
    <text evidence="3">Homodimer.</text>
</comment>
<comment type="tissue specificity">
    <text evidence="2">Expressed predominantly in root hairs.</text>
</comment>
<comment type="similarity">
    <text evidence="1">Belongs to the class I-like SAM-binding methyltransferase superfamily. Cation-independent O-methyltransferase family. COMT subfamily.</text>
</comment>